<comment type="function">
    <text evidence="2">DNA repair enzyme that can remove a variety of covalent adducts from DNA through hydrolysis of a 5'-phosphodiester bond, giving rise to DNA with a free 5' phosphate. Catalyzes the hydrolysis of dead-end complexes between DNA and the topoisomerase 2 (top2) active site tyrosine residue. Hydrolyzes 5'-phosphoglycolates on protruding 5' ends on DNA double-strand breaks (DSBs) due to DNA damage by radiation and free radicals.</text>
</comment>
<comment type="cofactor">
    <cofactor evidence="2">
        <name>Mg(2+)</name>
        <dbReference type="ChEBI" id="CHEBI:18420"/>
    </cofactor>
    <cofactor evidence="2">
        <name>Mn(2+)</name>
        <dbReference type="ChEBI" id="CHEBI:29035"/>
    </cofactor>
    <text evidence="2">Binds 1 magnesium or manganese ion per subunit.</text>
</comment>
<comment type="subcellular location">
    <subcellularLocation>
        <location evidence="1">Nucleus</location>
    </subcellularLocation>
    <subcellularLocation>
        <location evidence="1">Nucleus</location>
        <location evidence="1">PML body</location>
    </subcellularLocation>
</comment>
<comment type="similarity">
    <text evidence="3">Belongs to the CCR4/nocturin family. TTRAP/TDP2 subfamily.</text>
</comment>
<organism>
    <name type="scientific">Xenopus laevis</name>
    <name type="common">African clawed frog</name>
    <dbReference type="NCBI Taxonomy" id="8355"/>
    <lineage>
        <taxon>Eukaryota</taxon>
        <taxon>Metazoa</taxon>
        <taxon>Chordata</taxon>
        <taxon>Craniata</taxon>
        <taxon>Vertebrata</taxon>
        <taxon>Euteleostomi</taxon>
        <taxon>Amphibia</taxon>
        <taxon>Batrachia</taxon>
        <taxon>Anura</taxon>
        <taxon>Pipoidea</taxon>
        <taxon>Pipidae</taxon>
        <taxon>Xenopodinae</taxon>
        <taxon>Xenopus</taxon>
        <taxon>Xenopus</taxon>
    </lineage>
</organism>
<reference key="1">
    <citation type="submission" date="2007-05" db="EMBL/GenBank/DDBJ databases">
        <authorList>
            <consortium name="NIH - Xenopus Gene Collection (XGC) project"/>
        </authorList>
    </citation>
    <scope>NUCLEOTIDE SEQUENCE [LARGE SCALE MRNA]</scope>
    <source>
        <tissue>Testis</tissue>
    </source>
</reference>
<name>TYDP2_XENLA</name>
<protein>
    <recommendedName>
        <fullName>Tyrosyl-DNA phosphodiesterase 2</fullName>
        <shortName>Tyr-DNA phosphodiesterase 2</shortName>
        <ecNumber evidence="2">3.1.4.-</ecNumber>
    </recommendedName>
    <alternativeName>
        <fullName>5'-tyrosyl-DNA phosphodiesterase</fullName>
        <shortName>5'-Tyr-DNA phosphodiesterase</shortName>
    </alternativeName>
    <alternativeName>
        <fullName>TRAF and TNF receptor-associated protein homolog</fullName>
    </alternativeName>
</protein>
<sequence>MEVEEAGAVQTGTGEAVVANERTKQCSAFASITGCDEAVAQCFLAENDWDMERAINSYFEPGVESTLQNKPAADLADPLKQEMHAVTSDACIDLTSDDLVATKSEAVTSNSSTVKQQEDESHFTFLTWNIDGLDESNVAERARAVCSCLALYTPDVVFLQEVIPPYCEYLKKRAVSYKIITGNEDEYFTAMMLKKSRVKLISQEIVPYPSTLMMRNLLVANVNISGNSICLMTSHLESTKDHSKERLKQLDTVLKKMMDAPPSATVIFGGDTNLRDQEVAKIGGLPNTILDVWEFLGKPEHCRYTWDTKLNNNLRACYTSRLRFDRILYRASMEGSQVIPQFLNLVGTEKLDCGRFPSDHWGLLCDFDIIL</sequence>
<dbReference type="EC" id="3.1.4.-" evidence="2"/>
<dbReference type="EMBL" id="BC141728">
    <property type="protein sequence ID" value="AAI41729.1"/>
    <property type="molecule type" value="mRNA"/>
</dbReference>
<dbReference type="RefSeq" id="NP_001092156.1">
    <property type="nucleotide sequence ID" value="NM_001098686.1"/>
</dbReference>
<dbReference type="SMR" id="A5D8M0"/>
<dbReference type="DNASU" id="100049743"/>
<dbReference type="GeneID" id="100049743"/>
<dbReference type="KEGG" id="xla:100049743"/>
<dbReference type="AGR" id="Xenbase:XB-GENE-967018"/>
<dbReference type="CTD" id="100049743"/>
<dbReference type="Xenbase" id="XB-GENE-967018">
    <property type="gene designation" value="tdp2.S"/>
</dbReference>
<dbReference type="OrthoDB" id="9975959at2759"/>
<dbReference type="Proteomes" id="UP000186698">
    <property type="component" value="Chromosome 6S"/>
</dbReference>
<dbReference type="Bgee" id="100049743">
    <property type="expression patterns" value="Expressed in egg cell and 19 other cell types or tissues"/>
</dbReference>
<dbReference type="GO" id="GO:0005737">
    <property type="term" value="C:cytoplasm"/>
    <property type="evidence" value="ECO:0000318"/>
    <property type="project" value="GO_Central"/>
</dbReference>
<dbReference type="GO" id="GO:0016605">
    <property type="term" value="C:PML body"/>
    <property type="evidence" value="ECO:0000250"/>
    <property type="project" value="UniProtKB"/>
</dbReference>
<dbReference type="GO" id="GO:0070260">
    <property type="term" value="F:5'-tyrosyl-DNA phosphodiesterase activity"/>
    <property type="evidence" value="ECO:0000250"/>
    <property type="project" value="UniProtKB"/>
</dbReference>
<dbReference type="GO" id="GO:0000287">
    <property type="term" value="F:magnesium ion binding"/>
    <property type="evidence" value="ECO:0000250"/>
    <property type="project" value="UniProtKB"/>
</dbReference>
<dbReference type="GO" id="GO:0030145">
    <property type="term" value="F:manganese ion binding"/>
    <property type="evidence" value="ECO:0000250"/>
    <property type="project" value="UniProtKB"/>
</dbReference>
<dbReference type="GO" id="GO:0004518">
    <property type="term" value="F:nuclease activity"/>
    <property type="evidence" value="ECO:0007669"/>
    <property type="project" value="UniProtKB-KW"/>
</dbReference>
<dbReference type="GO" id="GO:0003697">
    <property type="term" value="F:single-stranded DNA binding"/>
    <property type="evidence" value="ECO:0000250"/>
    <property type="project" value="UniProtKB"/>
</dbReference>
<dbReference type="GO" id="GO:0006302">
    <property type="term" value="P:double-strand break repair"/>
    <property type="evidence" value="ECO:0000250"/>
    <property type="project" value="UniProtKB"/>
</dbReference>
<dbReference type="CDD" id="cd09080">
    <property type="entry name" value="TDP2"/>
    <property type="match status" value="1"/>
</dbReference>
<dbReference type="CDD" id="cd14344">
    <property type="entry name" value="UBA_TYDP2"/>
    <property type="match status" value="1"/>
</dbReference>
<dbReference type="FunFam" id="1.10.8.10:FF:000142">
    <property type="entry name" value="Tyrosyl-DNA phosphodiesterase 2"/>
    <property type="match status" value="1"/>
</dbReference>
<dbReference type="FunFam" id="3.60.10.10:FF:000024">
    <property type="entry name" value="Tyrosyl-DNA phosphodiesterase 2"/>
    <property type="match status" value="1"/>
</dbReference>
<dbReference type="Gene3D" id="1.10.8.10">
    <property type="entry name" value="DNA helicase RuvA subunit, C-terminal domain"/>
    <property type="match status" value="1"/>
</dbReference>
<dbReference type="Gene3D" id="3.60.10.10">
    <property type="entry name" value="Endonuclease/exonuclease/phosphatase"/>
    <property type="match status" value="1"/>
</dbReference>
<dbReference type="InterPro" id="IPR036691">
    <property type="entry name" value="Endo/exonu/phosph_ase_sf"/>
</dbReference>
<dbReference type="InterPro" id="IPR005135">
    <property type="entry name" value="Endo/exonuclease/phosphatase"/>
</dbReference>
<dbReference type="InterPro" id="IPR051547">
    <property type="entry name" value="TDP2-like"/>
</dbReference>
<dbReference type="InterPro" id="IPR009060">
    <property type="entry name" value="UBA-like_sf"/>
</dbReference>
<dbReference type="PANTHER" id="PTHR15822">
    <property type="entry name" value="TRAF AND TNF RECEPTOR-ASSOCIATED PROTEIN"/>
    <property type="match status" value="1"/>
</dbReference>
<dbReference type="PANTHER" id="PTHR15822:SF4">
    <property type="entry name" value="TYROSYL-DNA PHOSPHODIESTERASE 2"/>
    <property type="match status" value="1"/>
</dbReference>
<dbReference type="Pfam" id="PF03372">
    <property type="entry name" value="Exo_endo_phos"/>
    <property type="match status" value="1"/>
</dbReference>
<dbReference type="Pfam" id="PF14555">
    <property type="entry name" value="UBA_4"/>
    <property type="match status" value="1"/>
</dbReference>
<dbReference type="SUPFAM" id="SSF56219">
    <property type="entry name" value="DNase I-like"/>
    <property type="match status" value="1"/>
</dbReference>
<dbReference type="SUPFAM" id="SSF46934">
    <property type="entry name" value="UBA-like"/>
    <property type="match status" value="1"/>
</dbReference>
<gene>
    <name type="primary">tdp2</name>
    <name type="synonym">ttrap</name>
</gene>
<accession>A5D8M0</accession>
<keyword id="KW-0227">DNA damage</keyword>
<keyword id="KW-0234">DNA repair</keyword>
<keyword id="KW-0378">Hydrolase</keyword>
<keyword id="KW-0460">Magnesium</keyword>
<keyword id="KW-0479">Metal-binding</keyword>
<keyword id="KW-0540">Nuclease</keyword>
<keyword id="KW-0539">Nucleus</keyword>
<keyword id="KW-1185">Reference proteome</keyword>
<feature type="chain" id="PRO_0000390451" description="Tyrosyl-DNA phosphodiesterase 2">
    <location>
        <begin position="1"/>
        <end position="371"/>
    </location>
</feature>
<feature type="region of interest" description="Interaction with 5' end of substrate DNA" evidence="2">
    <location>
        <begin position="129"/>
        <end position="133"/>
    </location>
</feature>
<feature type="region of interest" description="Interaction with 5' end of substrate DNA" evidence="2">
    <location>
        <begin position="235"/>
        <end position="240"/>
    </location>
</feature>
<feature type="region of interest" description="Interaction with 5' end of substrate DNA" evidence="2">
    <location>
        <begin position="273"/>
        <end position="275"/>
    </location>
</feature>
<feature type="active site" description="Proton donor/acceptor" evidence="1">
    <location>
        <position position="271"/>
    </location>
</feature>
<feature type="binding site" evidence="2">
    <location>
        <position position="131"/>
    </location>
    <ligand>
        <name>Mg(2+)</name>
        <dbReference type="ChEBI" id="CHEBI:18420"/>
    </ligand>
</feature>
<feature type="binding site" evidence="2">
    <location>
        <position position="161"/>
    </location>
    <ligand>
        <name>Mg(2+)</name>
        <dbReference type="ChEBI" id="CHEBI:18420"/>
    </ligand>
</feature>
<feature type="site" description="Interaction with 5' end of substrate DNA" evidence="2">
    <location>
        <position position="187"/>
    </location>
</feature>
<feature type="site" description="Interaction with 5' end of substrate DNA" evidence="2">
    <location>
        <position position="306"/>
    </location>
</feature>
<feature type="site" description="Interaction with 5' end of substrate DNA" evidence="2">
    <location>
        <position position="324"/>
    </location>
</feature>
<feature type="site" description="Interaction with 5' end of substrate DNA" evidence="2">
    <location>
        <position position="360"/>
    </location>
</feature>
<proteinExistence type="evidence at transcript level"/>
<evidence type="ECO:0000250" key="1">
    <source>
        <dbReference type="UniProtKB" id="O95551"/>
    </source>
</evidence>
<evidence type="ECO:0000250" key="2">
    <source>
        <dbReference type="UniProtKB" id="Q9JJX7"/>
    </source>
</evidence>
<evidence type="ECO:0000305" key="3"/>